<proteinExistence type="evidence at transcript level"/>
<comment type="function">
    <text>Is committed to plant tetrapyrrole synthesis.</text>
</comment>
<comment type="function">
    <text evidence="1">Catalyzes an early step in the biosynthesis of tetrapyrroles. Binds two molecules of 5-aminolevulinate per subunit, each at a distinct site, and catalyzes their condensation to form porphobilinogen (By similarity).</text>
</comment>
<comment type="catalytic activity">
    <reaction>
        <text>2 5-aminolevulinate = porphobilinogen + 2 H2O + H(+)</text>
        <dbReference type="Rhea" id="RHEA:24064"/>
        <dbReference type="ChEBI" id="CHEBI:15377"/>
        <dbReference type="ChEBI" id="CHEBI:15378"/>
        <dbReference type="ChEBI" id="CHEBI:58126"/>
        <dbReference type="ChEBI" id="CHEBI:356416"/>
        <dbReference type="EC" id="4.2.1.24"/>
    </reaction>
</comment>
<comment type="cofactor">
    <cofactor evidence="1">
        <name>Mg(2+)</name>
        <dbReference type="ChEBI" id="CHEBI:18420"/>
    </cofactor>
    <text evidence="1">Binds 2 magnesium ions per monomer. The first magnesium ion is required for catalysis. The second functions as allosteric activator.</text>
</comment>
<comment type="pathway">
    <text>Porphyrin-containing compound metabolism; protoporphyrin-IX biosynthesis; coproporphyrinogen-III from 5-aminolevulinate: step 1/4.</text>
</comment>
<comment type="subunit">
    <text evidence="1">Homooctamer.</text>
</comment>
<comment type="subcellular location">
    <subcellularLocation>
        <location>Plastid</location>
        <location>Chloroplast</location>
    </subcellularLocation>
</comment>
<comment type="tissue specificity">
    <text>Leaves and root nodules.</text>
</comment>
<comment type="similarity">
    <text evidence="4">Belongs to the ALAD family.</text>
</comment>
<gene>
    <name type="primary">HEMB</name>
    <name type="synonym">ALAD</name>
</gene>
<keyword id="KW-0021">Allosteric enzyme</keyword>
<keyword id="KW-0149">Chlorophyll biosynthesis</keyword>
<keyword id="KW-0150">Chloroplast</keyword>
<keyword id="KW-0350">Heme biosynthesis</keyword>
<keyword id="KW-0456">Lyase</keyword>
<keyword id="KW-0460">Magnesium</keyword>
<keyword id="KW-0479">Metal-binding</keyword>
<keyword id="KW-0934">Plastid</keyword>
<keyword id="KW-0627">Porphyrin biosynthesis</keyword>
<keyword id="KW-1185">Reference proteome</keyword>
<keyword id="KW-0809">Transit peptide</keyword>
<accession>P43210</accession>
<reference key="1">
    <citation type="journal article" date="1994" name="Plant Physiol.">
        <title>Plant delta-aminolevulinic acid dehydratase. Expression in soybean root nodules and evidence for a bacterial lineage of the Alad gene.</title>
        <authorList>
            <person name="Kaczor C.M."/>
            <person name="Smith M.W."/>
            <person name="Sangwan I."/>
            <person name="O'Brian M.R."/>
        </authorList>
    </citation>
    <scope>NUCLEOTIDE SEQUENCE [MRNA]</scope>
    <source>
        <tissue>Leaf</tissue>
    </source>
</reference>
<organism>
    <name type="scientific">Glycine max</name>
    <name type="common">Soybean</name>
    <name type="synonym">Glycine hispida</name>
    <dbReference type="NCBI Taxonomy" id="3847"/>
    <lineage>
        <taxon>Eukaryota</taxon>
        <taxon>Viridiplantae</taxon>
        <taxon>Streptophyta</taxon>
        <taxon>Embryophyta</taxon>
        <taxon>Tracheophyta</taxon>
        <taxon>Spermatophyta</taxon>
        <taxon>Magnoliopsida</taxon>
        <taxon>eudicotyledons</taxon>
        <taxon>Gunneridae</taxon>
        <taxon>Pentapetalae</taxon>
        <taxon>rosids</taxon>
        <taxon>fabids</taxon>
        <taxon>Fabales</taxon>
        <taxon>Fabaceae</taxon>
        <taxon>Papilionoideae</taxon>
        <taxon>50 kb inversion clade</taxon>
        <taxon>NPAAA clade</taxon>
        <taxon>indigoferoid/millettioid clade</taxon>
        <taxon>Phaseoleae</taxon>
        <taxon>Glycine</taxon>
        <taxon>Glycine subgen. Soja</taxon>
    </lineage>
</organism>
<dbReference type="EC" id="4.2.1.24"/>
<dbReference type="EMBL" id="U04525">
    <property type="protein sequence ID" value="AAA18342.1"/>
    <property type="molecule type" value="mRNA"/>
</dbReference>
<dbReference type="PIR" id="T06351">
    <property type="entry name" value="T06351"/>
</dbReference>
<dbReference type="RefSeq" id="NP_001238737.1">
    <property type="nucleotide sequence ID" value="NM_001251808.1"/>
</dbReference>
<dbReference type="SMR" id="P43210"/>
<dbReference type="FunCoup" id="P43210">
    <property type="interactions" value="5051"/>
</dbReference>
<dbReference type="STRING" id="3847.P43210"/>
<dbReference type="PaxDb" id="3847-GLYMA06G12110.1"/>
<dbReference type="ProMEX" id="P43210"/>
<dbReference type="GeneID" id="548095"/>
<dbReference type="KEGG" id="gmx:548095"/>
<dbReference type="eggNOG" id="KOG2794">
    <property type="taxonomic scope" value="Eukaryota"/>
</dbReference>
<dbReference type="InParanoid" id="P43210"/>
<dbReference type="OrthoDB" id="1530at2759"/>
<dbReference type="UniPathway" id="UPA00251">
    <property type="reaction ID" value="UER00318"/>
</dbReference>
<dbReference type="Proteomes" id="UP000008827">
    <property type="component" value="Unplaced"/>
</dbReference>
<dbReference type="GO" id="GO:0009507">
    <property type="term" value="C:chloroplast"/>
    <property type="evidence" value="ECO:0007669"/>
    <property type="project" value="UniProtKB-SubCell"/>
</dbReference>
<dbReference type="GO" id="GO:0005829">
    <property type="term" value="C:cytosol"/>
    <property type="evidence" value="ECO:0000318"/>
    <property type="project" value="GO_Central"/>
</dbReference>
<dbReference type="GO" id="GO:0004655">
    <property type="term" value="F:porphobilinogen synthase activity"/>
    <property type="evidence" value="ECO:0000318"/>
    <property type="project" value="GO_Central"/>
</dbReference>
<dbReference type="GO" id="GO:0008270">
    <property type="term" value="F:zinc ion binding"/>
    <property type="evidence" value="ECO:0000318"/>
    <property type="project" value="GO_Central"/>
</dbReference>
<dbReference type="GO" id="GO:0015995">
    <property type="term" value="P:chlorophyll biosynthetic process"/>
    <property type="evidence" value="ECO:0007669"/>
    <property type="project" value="UniProtKB-KW"/>
</dbReference>
<dbReference type="GO" id="GO:0006783">
    <property type="term" value="P:heme biosynthetic process"/>
    <property type="evidence" value="ECO:0000318"/>
    <property type="project" value="GO_Central"/>
</dbReference>
<dbReference type="GO" id="GO:0006782">
    <property type="term" value="P:protoporphyrinogen IX biosynthetic process"/>
    <property type="evidence" value="ECO:0007669"/>
    <property type="project" value="UniProtKB-UniPathway"/>
</dbReference>
<dbReference type="CDD" id="cd04823">
    <property type="entry name" value="ALAD_PBGS_aspartate_rich"/>
    <property type="match status" value="1"/>
</dbReference>
<dbReference type="FunFam" id="3.20.20.70:FF:000101">
    <property type="entry name" value="Delta-aminolevulinic acid dehydratase"/>
    <property type="match status" value="1"/>
</dbReference>
<dbReference type="Gene3D" id="3.20.20.70">
    <property type="entry name" value="Aldolase class I"/>
    <property type="match status" value="1"/>
</dbReference>
<dbReference type="InterPro" id="IPR001731">
    <property type="entry name" value="ALAD"/>
</dbReference>
<dbReference type="InterPro" id="IPR030656">
    <property type="entry name" value="ALAD_AS"/>
</dbReference>
<dbReference type="InterPro" id="IPR013785">
    <property type="entry name" value="Aldolase_TIM"/>
</dbReference>
<dbReference type="NCBIfam" id="NF006762">
    <property type="entry name" value="PRK09283.1"/>
    <property type="match status" value="1"/>
</dbReference>
<dbReference type="PANTHER" id="PTHR11458">
    <property type="entry name" value="DELTA-AMINOLEVULINIC ACID DEHYDRATASE"/>
    <property type="match status" value="1"/>
</dbReference>
<dbReference type="PANTHER" id="PTHR11458:SF0">
    <property type="entry name" value="DELTA-AMINOLEVULINIC ACID DEHYDRATASE"/>
    <property type="match status" value="1"/>
</dbReference>
<dbReference type="Pfam" id="PF00490">
    <property type="entry name" value="ALAD"/>
    <property type="match status" value="1"/>
</dbReference>
<dbReference type="PRINTS" id="PR00144">
    <property type="entry name" value="DALDHYDRTASE"/>
</dbReference>
<dbReference type="SMART" id="SM01004">
    <property type="entry name" value="ALAD"/>
    <property type="match status" value="1"/>
</dbReference>
<dbReference type="SUPFAM" id="SSF51569">
    <property type="entry name" value="Aldolase"/>
    <property type="match status" value="1"/>
</dbReference>
<dbReference type="PROSITE" id="PS00169">
    <property type="entry name" value="D_ALA_DEHYDRATASE"/>
    <property type="match status" value="1"/>
</dbReference>
<sequence length="412" mass="45068">MASSIPNAPSAFNSQSYVGLRAPLRTFNFSSPQAAKIPRSQRLFVVRASDSEFEAAVVAGKVPPAPPVRPRPAAPVGTPVVPSLPLHRRPRRNRKSPALRSAFQETSISPANFVYPLFIHEGEEDTPIGAMPGCYRLGWRHGLVEEVAKARDVGVNSVVLFPKIPDALKSPTGDEAYNENGLVPRTIRLLKDKYPDLVIYTDVALDPYSSDGHDGIVREDGVIMNDETVHQLCKQAVAQAQAGADVVSPSDMMDGRVGALRAALDAEGFQHVSIMSYTAKYASSFYGPFREALDSNPRFGDKKTYQMNPANYREALTEMREDESEGADILLVKPGLPYLDIIRLLRDNSPLPIAAYQVSGEYAMIKAAGALKMIDEEKVMMESLMCLRRAGADIILTYSALQAARCLCGEKR</sequence>
<feature type="transit peptide" description="Chloroplast" evidence="2">
    <location>
        <begin position="1"/>
        <end position="48"/>
    </location>
</feature>
<feature type="chain" id="PRO_0000013320" description="Delta-aminolevulinic acid dehydratase, chloroplastic">
    <location>
        <begin position="49"/>
        <end position="412"/>
    </location>
</feature>
<feature type="region of interest" description="Disordered" evidence="3">
    <location>
        <begin position="68"/>
        <end position="101"/>
    </location>
</feature>
<feature type="compositionally biased region" description="Basic residues" evidence="3">
    <location>
        <begin position="86"/>
        <end position="97"/>
    </location>
</feature>
<feature type="active site" description="Schiff-base intermediate with substrate" evidence="1">
    <location>
        <position position="280"/>
    </location>
</feature>
<feature type="active site" description="Schiff-base intermediate with substrate" evidence="1">
    <location>
        <position position="333"/>
    </location>
</feature>
<feature type="binding site" evidence="1">
    <location>
        <position position="290"/>
    </location>
    <ligand>
        <name>5-aminolevulinate</name>
        <dbReference type="ChEBI" id="CHEBI:356416"/>
        <label>1</label>
    </ligand>
</feature>
<feature type="binding site" evidence="1">
    <location>
        <position position="302"/>
    </location>
    <ligand>
        <name>5-aminolevulinate</name>
        <dbReference type="ChEBI" id="CHEBI:356416"/>
        <label>1</label>
    </ligand>
</feature>
<feature type="binding site" evidence="1">
    <location>
        <position position="318"/>
    </location>
    <ligand>
        <name>Mg(2+)</name>
        <dbReference type="ChEBI" id="CHEBI:18420"/>
    </ligand>
</feature>
<feature type="binding site" evidence="1">
    <location>
        <position position="359"/>
    </location>
    <ligand>
        <name>5-aminolevulinate</name>
        <dbReference type="ChEBI" id="CHEBI:356416"/>
        <label>2</label>
    </ligand>
</feature>
<feature type="binding site" evidence="1">
    <location>
        <position position="398"/>
    </location>
    <ligand>
        <name>5-aminolevulinate</name>
        <dbReference type="ChEBI" id="CHEBI:356416"/>
        <label>2</label>
    </ligand>
</feature>
<name>HEM2_SOYBN</name>
<evidence type="ECO:0000250" key="1"/>
<evidence type="ECO:0000255" key="2"/>
<evidence type="ECO:0000256" key="3">
    <source>
        <dbReference type="SAM" id="MobiDB-lite"/>
    </source>
</evidence>
<evidence type="ECO:0000305" key="4"/>
<protein>
    <recommendedName>
        <fullName>Delta-aminolevulinic acid dehydratase, chloroplastic</fullName>
        <shortName>ALADH</shortName>
        <ecNumber>4.2.1.24</ecNumber>
    </recommendedName>
    <alternativeName>
        <fullName>Porphobilinogen synthase</fullName>
    </alternativeName>
</protein>